<protein>
    <recommendedName>
        <fullName evidence="1">Cobyric acid synthase</fullName>
    </recommendedName>
</protein>
<name>COBQ_BEII9</name>
<evidence type="ECO:0000255" key="1">
    <source>
        <dbReference type="HAMAP-Rule" id="MF_00028"/>
    </source>
</evidence>
<reference key="1">
    <citation type="journal article" date="2010" name="J. Bacteriol.">
        <title>Complete genome sequence of Beijerinckia indica subsp. indica.</title>
        <authorList>
            <person name="Tamas I."/>
            <person name="Dedysh S.N."/>
            <person name="Liesack W."/>
            <person name="Stott M.B."/>
            <person name="Alam M."/>
            <person name="Murrell J.C."/>
            <person name="Dunfield P.F."/>
        </authorList>
    </citation>
    <scope>NUCLEOTIDE SEQUENCE [LARGE SCALE GENOMIC DNA]</scope>
    <source>
        <strain>ATCC 9039 / DSM 1715 / NCIMB 8712</strain>
    </source>
</reference>
<dbReference type="EMBL" id="CP001016">
    <property type="protein sequence ID" value="ACB94040.1"/>
    <property type="molecule type" value="Genomic_DNA"/>
</dbReference>
<dbReference type="RefSeq" id="WP_012383398.1">
    <property type="nucleotide sequence ID" value="NC_010581.1"/>
</dbReference>
<dbReference type="SMR" id="B2IE16"/>
<dbReference type="STRING" id="395963.Bind_0387"/>
<dbReference type="KEGG" id="bid:Bind_0387"/>
<dbReference type="eggNOG" id="COG1492">
    <property type="taxonomic scope" value="Bacteria"/>
</dbReference>
<dbReference type="HOGENOM" id="CLU_019250_2_2_5"/>
<dbReference type="UniPathway" id="UPA00148"/>
<dbReference type="Proteomes" id="UP000001695">
    <property type="component" value="Chromosome"/>
</dbReference>
<dbReference type="GO" id="GO:0015420">
    <property type="term" value="F:ABC-type vitamin B12 transporter activity"/>
    <property type="evidence" value="ECO:0007669"/>
    <property type="project" value="UniProtKB-UniRule"/>
</dbReference>
<dbReference type="GO" id="GO:0003824">
    <property type="term" value="F:catalytic activity"/>
    <property type="evidence" value="ECO:0007669"/>
    <property type="project" value="InterPro"/>
</dbReference>
<dbReference type="GO" id="GO:0009236">
    <property type="term" value="P:cobalamin biosynthetic process"/>
    <property type="evidence" value="ECO:0007669"/>
    <property type="project" value="UniProtKB-UniRule"/>
</dbReference>
<dbReference type="CDD" id="cd05389">
    <property type="entry name" value="CobQ_N"/>
    <property type="match status" value="1"/>
</dbReference>
<dbReference type="CDD" id="cd01750">
    <property type="entry name" value="GATase1_CobQ"/>
    <property type="match status" value="1"/>
</dbReference>
<dbReference type="Gene3D" id="3.40.50.880">
    <property type="match status" value="1"/>
</dbReference>
<dbReference type="Gene3D" id="3.40.50.300">
    <property type="entry name" value="P-loop containing nucleotide triphosphate hydrolases"/>
    <property type="match status" value="1"/>
</dbReference>
<dbReference type="HAMAP" id="MF_00028">
    <property type="entry name" value="CobQ"/>
    <property type="match status" value="1"/>
</dbReference>
<dbReference type="InterPro" id="IPR029062">
    <property type="entry name" value="Class_I_gatase-like"/>
</dbReference>
<dbReference type="InterPro" id="IPR002586">
    <property type="entry name" value="CobQ/CobB/MinD/ParA_Nub-bd_dom"/>
</dbReference>
<dbReference type="InterPro" id="IPR033949">
    <property type="entry name" value="CobQ_GATase1"/>
</dbReference>
<dbReference type="InterPro" id="IPR047045">
    <property type="entry name" value="CobQ_N"/>
</dbReference>
<dbReference type="InterPro" id="IPR004459">
    <property type="entry name" value="CobQ_synth"/>
</dbReference>
<dbReference type="InterPro" id="IPR011698">
    <property type="entry name" value="GATase_3"/>
</dbReference>
<dbReference type="InterPro" id="IPR027417">
    <property type="entry name" value="P-loop_NTPase"/>
</dbReference>
<dbReference type="NCBIfam" id="TIGR00313">
    <property type="entry name" value="cobQ"/>
    <property type="match status" value="1"/>
</dbReference>
<dbReference type="NCBIfam" id="NF001989">
    <property type="entry name" value="PRK00784.1"/>
    <property type="match status" value="1"/>
</dbReference>
<dbReference type="PANTHER" id="PTHR21343:SF1">
    <property type="entry name" value="COBYRIC ACID SYNTHASE"/>
    <property type="match status" value="1"/>
</dbReference>
<dbReference type="PANTHER" id="PTHR21343">
    <property type="entry name" value="DETHIOBIOTIN SYNTHETASE"/>
    <property type="match status" value="1"/>
</dbReference>
<dbReference type="Pfam" id="PF01656">
    <property type="entry name" value="CbiA"/>
    <property type="match status" value="1"/>
</dbReference>
<dbReference type="Pfam" id="PF07685">
    <property type="entry name" value="GATase_3"/>
    <property type="match status" value="1"/>
</dbReference>
<dbReference type="SUPFAM" id="SSF52317">
    <property type="entry name" value="Class I glutamine amidotransferase-like"/>
    <property type="match status" value="1"/>
</dbReference>
<dbReference type="SUPFAM" id="SSF52540">
    <property type="entry name" value="P-loop containing nucleoside triphosphate hydrolases"/>
    <property type="match status" value="1"/>
</dbReference>
<dbReference type="PROSITE" id="PS51274">
    <property type="entry name" value="GATASE_COBBQ"/>
    <property type="match status" value="1"/>
</dbReference>
<gene>
    <name evidence="1" type="primary">cobQ</name>
    <name type="ordered locus">Bind_0387</name>
</gene>
<comment type="function">
    <text evidence="1">Catalyzes amidations at positions B, D, E, and G on adenosylcobyrinic A,C-diamide. NH(2) groups are provided by glutamine, and one molecule of ATP is hydrogenolyzed for each amidation.</text>
</comment>
<comment type="pathway">
    <text evidence="1">Cofactor biosynthesis; adenosylcobalamin biosynthesis.</text>
</comment>
<comment type="similarity">
    <text evidence="1">Belongs to the CobB/CobQ family. CobQ subfamily.</text>
</comment>
<keyword id="KW-0169">Cobalamin biosynthesis</keyword>
<keyword id="KW-0315">Glutamine amidotransferase</keyword>
<keyword id="KW-1185">Reference proteome</keyword>
<sequence>MAKALMLQGTGSDVGKTLIVAGLCRAYMRRGLRVRPFKPQNMSNNAAVTLDGGEIGRAQALQAQACGVPPSVHMNPVLLKPQSGTGSQIILQGRLSGQAEARTYQAMKKHWLAIVLESFQHLKDEADLVLVEGAGSASEINLRANDIANMGFARAADVPVIVIGDIDRGGVIAQIAGTKLVITPQDAEMVVGFLVNRFRGDPDLFKEGMRQIEHFSGWRGLGLIPHCPAARDLPAEDAMALGRHLNGERSAHTKFKIVVPVLPGIANFDDLDPLRMERGVELIMIRPGTYLPVEADLVLLIGSKTTIADLVAFREAGWDVDLAAYVRRGGKVFGLCGGYQMLGENLRDPLGLEGPPSEVRGLGLLALETVFTQEKTLVAVEGVSLPDEVPFTGFEMHVGHTSGDDCARPFLRLTDGRQDGAVSKDGRIAGCYVHGLFGMDTQRRAFLARFGVAAGDFSYLEKVEAALDAVADHLAQHIDLDHLLTLAR</sequence>
<organism>
    <name type="scientific">Beijerinckia indica subsp. indica (strain ATCC 9039 / DSM 1715 / NCIMB 8712)</name>
    <dbReference type="NCBI Taxonomy" id="395963"/>
    <lineage>
        <taxon>Bacteria</taxon>
        <taxon>Pseudomonadati</taxon>
        <taxon>Pseudomonadota</taxon>
        <taxon>Alphaproteobacteria</taxon>
        <taxon>Hyphomicrobiales</taxon>
        <taxon>Beijerinckiaceae</taxon>
        <taxon>Beijerinckia</taxon>
    </lineage>
</organism>
<feature type="chain" id="PRO_1000116432" description="Cobyric acid synthase">
    <location>
        <begin position="1"/>
        <end position="488"/>
    </location>
</feature>
<feature type="domain" description="GATase cobBQ-type" evidence="1">
    <location>
        <begin position="254"/>
        <end position="442"/>
    </location>
</feature>
<feature type="active site" description="Nucleophile" evidence="1">
    <location>
        <position position="336"/>
    </location>
</feature>
<feature type="active site" evidence="1">
    <location>
        <position position="434"/>
    </location>
</feature>
<proteinExistence type="inferred from homology"/>
<accession>B2IE16</accession>